<proteinExistence type="inferred from homology"/>
<keyword id="KW-0539">Nucleus</keyword>
<keyword id="KW-0677">Repeat</keyword>
<keyword id="KW-0690">Ribosome biogenesis</keyword>
<keyword id="KW-0698">rRNA processing</keyword>
<protein>
    <recommendedName>
        <fullName>Nucleolar protein 9</fullName>
    </recommendedName>
    <alternativeName>
        <fullName>Pumilio domain-containing protein NOP9</fullName>
    </alternativeName>
</protein>
<organism>
    <name type="scientific">Coccidioides posadasii (strain C735)</name>
    <name type="common">Valley fever fungus</name>
    <dbReference type="NCBI Taxonomy" id="222929"/>
    <lineage>
        <taxon>Eukaryota</taxon>
        <taxon>Fungi</taxon>
        <taxon>Dikarya</taxon>
        <taxon>Ascomycota</taxon>
        <taxon>Pezizomycotina</taxon>
        <taxon>Eurotiomycetes</taxon>
        <taxon>Eurotiomycetidae</taxon>
        <taxon>Onygenales</taxon>
        <taxon>Onygenaceae</taxon>
        <taxon>Coccidioides</taxon>
    </lineage>
</organism>
<dbReference type="EMBL" id="ACFW01000030">
    <property type="protein sequence ID" value="EER26343.1"/>
    <property type="status" value="ALT_INIT"/>
    <property type="molecule type" value="Genomic_DNA"/>
</dbReference>
<dbReference type="RefSeq" id="XP_003068488.1">
    <property type="nucleotide sequence ID" value="XM_003068442.1"/>
</dbReference>
<dbReference type="SMR" id="C5P9D1"/>
<dbReference type="GeneID" id="9693971"/>
<dbReference type="KEGG" id="cpw:9693971"/>
<dbReference type="HOGENOM" id="CLU_008720_1_1_1"/>
<dbReference type="OrthoDB" id="392571at2759"/>
<dbReference type="Proteomes" id="UP000009084">
    <property type="component" value="Unassembled WGS sequence"/>
</dbReference>
<dbReference type="GO" id="GO:0030686">
    <property type="term" value="C:90S preribosome"/>
    <property type="evidence" value="ECO:0007669"/>
    <property type="project" value="TreeGrafter"/>
</dbReference>
<dbReference type="GO" id="GO:0005730">
    <property type="term" value="C:nucleolus"/>
    <property type="evidence" value="ECO:0007669"/>
    <property type="project" value="UniProtKB-SubCell"/>
</dbReference>
<dbReference type="GO" id="GO:0030688">
    <property type="term" value="C:preribosome, small subunit precursor"/>
    <property type="evidence" value="ECO:0007669"/>
    <property type="project" value="TreeGrafter"/>
</dbReference>
<dbReference type="GO" id="GO:0003723">
    <property type="term" value="F:RNA binding"/>
    <property type="evidence" value="ECO:0007669"/>
    <property type="project" value="InterPro"/>
</dbReference>
<dbReference type="GO" id="GO:0000480">
    <property type="term" value="P:endonucleolytic cleavage in 5'-ETS of tricistronic rRNA transcript (SSU-rRNA, 5.8S rRNA, LSU-rRNA)"/>
    <property type="evidence" value="ECO:0007669"/>
    <property type="project" value="TreeGrafter"/>
</dbReference>
<dbReference type="GO" id="GO:0000447">
    <property type="term" value="P:endonucleolytic cleavage in ITS1 to separate SSU-rRNA from 5.8S rRNA and LSU-rRNA from tricistronic rRNA transcript (SSU-rRNA, 5.8S rRNA, LSU-rRNA)"/>
    <property type="evidence" value="ECO:0007669"/>
    <property type="project" value="TreeGrafter"/>
</dbReference>
<dbReference type="GO" id="GO:0000472">
    <property type="term" value="P:endonucleolytic cleavage to generate mature 5'-end of SSU-rRNA from (SSU-rRNA, 5.8S rRNA, LSU-rRNA)"/>
    <property type="evidence" value="ECO:0007669"/>
    <property type="project" value="TreeGrafter"/>
</dbReference>
<dbReference type="GO" id="GO:0000056">
    <property type="term" value="P:ribosomal small subunit export from nucleus"/>
    <property type="evidence" value="ECO:0007669"/>
    <property type="project" value="TreeGrafter"/>
</dbReference>
<dbReference type="Gene3D" id="1.25.10.10">
    <property type="entry name" value="Leucine-rich Repeat Variant"/>
    <property type="match status" value="3"/>
</dbReference>
<dbReference type="InterPro" id="IPR011989">
    <property type="entry name" value="ARM-like"/>
</dbReference>
<dbReference type="InterPro" id="IPR016024">
    <property type="entry name" value="ARM-type_fold"/>
</dbReference>
<dbReference type="InterPro" id="IPR040000">
    <property type="entry name" value="NOP9"/>
</dbReference>
<dbReference type="InterPro" id="IPR001313">
    <property type="entry name" value="Pumilio_RNA-bd_rpt"/>
</dbReference>
<dbReference type="PANTHER" id="PTHR13102">
    <property type="entry name" value="NUCLEOLAR PROTEIN 9"/>
    <property type="match status" value="1"/>
</dbReference>
<dbReference type="PANTHER" id="PTHR13102:SF0">
    <property type="entry name" value="NUCLEOLAR PROTEIN 9"/>
    <property type="match status" value="1"/>
</dbReference>
<dbReference type="Pfam" id="PF22493">
    <property type="entry name" value="PUF_NOP9"/>
    <property type="match status" value="1"/>
</dbReference>
<dbReference type="SMART" id="SM00025">
    <property type="entry name" value="Pumilio"/>
    <property type="match status" value="7"/>
</dbReference>
<dbReference type="SUPFAM" id="SSF48371">
    <property type="entry name" value="ARM repeat"/>
    <property type="match status" value="1"/>
</dbReference>
<gene>
    <name type="primary">NOP9</name>
    <name type="ORF">CPC735_005150</name>
</gene>
<name>NOP9_COCP7</name>
<comment type="function">
    <text evidence="1">RNA-binding nucleolar protein required for pre-rRNA processing. Involved in production of 18S rRNA and assembly of small ribosomal subunit (By similarity).</text>
</comment>
<comment type="subcellular location">
    <subcellularLocation>
        <location evidence="1">Nucleus</location>
        <location evidence="1">Nucleolus</location>
    </subcellularLocation>
</comment>
<comment type="similarity">
    <text evidence="3">Belongs to the NOP9 family.</text>
</comment>
<comment type="sequence caution" evidence="3">
    <conflict type="erroneous initiation">
        <sequence resource="EMBL-CDS" id="EER26343"/>
    </conflict>
    <text>Extended N-terminus.</text>
</comment>
<sequence>MPRERQKRGRRAEAKKDKDSQKRKRGHEATEAEITKRQKIQGDESSEVPVPHDSVFGHGDDYIPLEEEAAPVDDTPFYGLLDSDEQEYFSRANQTLELNQFENDEDRQLFIDSVLQEAGGKELKIACSQSCSRLMEKLISMSSASQLKQLFGKFSGHFLHLVQHRFASHCCERLFLRAAPIVTYESKPRTKKGDDAEENQDGGESASSLPMADLVLNAISELEGNWGYLLTESFASHTIRVLLLILAGKSLDNSSNIAVVASRKKENFDAFKTDPQSSSGKRSVPPVFQDALEKMINGLVAGLDTTYLRALATHPVGSPVLQVLLAVELTHLGKDRAKDPNSVLRRLIPDDSLENTESATFINGLFYDPVGSRLLETLFQHVPGKFFKMIYKSIVRERIGSLSRNEIASYVAVRVLERLSKEDLQATMDTILREVPSMVERSRLNVIKALIERGAVRGANLTPLANTLKSAYGEEAVSRLKKILKLDEASEPSKEDPTKSATNLPSQQLHGSLLAQAMLRVPGPLAEMIRSSFLEATVPFLLDIAKSPTGSRVLQESLIFSKATGQFRRQIIPKFSGHLCELALNTSGSHVVDILWQATSDLLFLKQRLADELVANEKALRDSFLGRAVWRNWSMDLYKRKRGEWISRAKGLDLNASTADSSNNEQVTKPKSKLDLARERFAAQVEEKARKPESENPKGKEEIKAGKKRKPAALSAKSLLSA</sequence>
<reference key="1">
    <citation type="journal article" date="2009" name="Genome Res.">
        <title>Comparative genomic analyses of the human fungal pathogens Coccidioides and their relatives.</title>
        <authorList>
            <person name="Sharpton T.J."/>
            <person name="Stajich J.E."/>
            <person name="Rounsley S.D."/>
            <person name="Gardner M.J."/>
            <person name="Wortman J.R."/>
            <person name="Jordar V.S."/>
            <person name="Maiti R."/>
            <person name="Kodira C.D."/>
            <person name="Neafsey D.E."/>
            <person name="Zeng Q."/>
            <person name="Hung C.-Y."/>
            <person name="McMahan C."/>
            <person name="Muszewska A."/>
            <person name="Grynberg M."/>
            <person name="Mandel M.A."/>
            <person name="Kellner E.M."/>
            <person name="Barker B.M."/>
            <person name="Galgiani J.N."/>
            <person name="Orbach M.J."/>
            <person name="Kirkland T.N."/>
            <person name="Cole G.T."/>
            <person name="Henn M.R."/>
            <person name="Birren B.W."/>
            <person name="Taylor J.W."/>
        </authorList>
    </citation>
    <scope>NUCLEOTIDE SEQUENCE [LARGE SCALE GENOMIC DNA]</scope>
    <source>
        <strain>C735</strain>
    </source>
</reference>
<feature type="chain" id="PRO_0000407809" description="Nucleolar protein 9">
    <location>
        <begin position="1"/>
        <end position="722"/>
    </location>
</feature>
<feature type="repeat" description="Pumilio 1">
    <location>
        <begin position="113"/>
        <end position="152"/>
    </location>
</feature>
<feature type="repeat" description="Pumilio 2">
    <location>
        <begin position="153"/>
        <end position="188"/>
    </location>
</feature>
<feature type="repeat" description="Pumilio 3">
    <location>
        <begin position="303"/>
        <end position="339"/>
    </location>
</feature>
<feature type="repeat" description="Pumilio 4">
    <location>
        <begin position="357"/>
        <end position="392"/>
    </location>
</feature>
<feature type="repeat" description="Pumilio 5">
    <location>
        <begin position="393"/>
        <end position="429"/>
    </location>
</feature>
<feature type="repeat" description="Pumilio 6">
    <location>
        <begin position="535"/>
        <end position="573"/>
    </location>
</feature>
<feature type="repeat" description="Pumilio 7">
    <location>
        <begin position="574"/>
        <end position="611"/>
    </location>
</feature>
<feature type="region of interest" description="Disordered" evidence="2">
    <location>
        <begin position="1"/>
        <end position="54"/>
    </location>
</feature>
<feature type="region of interest" description="Disordered" evidence="2">
    <location>
        <begin position="187"/>
        <end position="207"/>
    </location>
</feature>
<feature type="region of interest" description="Disordered" evidence="2">
    <location>
        <begin position="684"/>
        <end position="722"/>
    </location>
</feature>
<feature type="compositionally biased region" description="Basic residues" evidence="2">
    <location>
        <begin position="1"/>
        <end position="10"/>
    </location>
</feature>
<feature type="compositionally biased region" description="Basic and acidic residues" evidence="2">
    <location>
        <begin position="11"/>
        <end position="20"/>
    </location>
</feature>
<feature type="compositionally biased region" description="Basic and acidic residues" evidence="2">
    <location>
        <begin position="27"/>
        <end position="42"/>
    </location>
</feature>
<feature type="compositionally biased region" description="Basic and acidic residues" evidence="2">
    <location>
        <begin position="684"/>
        <end position="705"/>
    </location>
</feature>
<feature type="compositionally biased region" description="Low complexity" evidence="2">
    <location>
        <begin position="712"/>
        <end position="722"/>
    </location>
</feature>
<evidence type="ECO:0000250" key="1"/>
<evidence type="ECO:0000256" key="2">
    <source>
        <dbReference type="SAM" id="MobiDB-lite"/>
    </source>
</evidence>
<evidence type="ECO:0000305" key="3"/>
<accession>C5P9D1</accession>